<proteinExistence type="inferred from homology"/>
<gene>
    <name evidence="1" type="primary">hutH</name>
    <name type="ordered locus">Rru_A1301</name>
</gene>
<feature type="chain" id="PRO_1000071787" description="Histidine ammonia-lyase">
    <location>
        <begin position="1"/>
        <end position="514"/>
    </location>
</feature>
<feature type="modified residue" description="2,3-didehydroalanine (Ser)" evidence="1">
    <location>
        <position position="145"/>
    </location>
</feature>
<feature type="cross-link" description="5-imidazolinone (Ala-Gly)" evidence="1">
    <location>
        <begin position="144"/>
        <end position="146"/>
    </location>
</feature>
<organism>
    <name type="scientific">Rhodospirillum rubrum (strain ATCC 11170 / ATH 1.1.1 / DSM 467 / LMG 4362 / NCIMB 8255 / S1)</name>
    <dbReference type="NCBI Taxonomy" id="269796"/>
    <lineage>
        <taxon>Bacteria</taxon>
        <taxon>Pseudomonadati</taxon>
        <taxon>Pseudomonadota</taxon>
        <taxon>Alphaproteobacteria</taxon>
        <taxon>Rhodospirillales</taxon>
        <taxon>Rhodospirillaceae</taxon>
        <taxon>Rhodospirillum</taxon>
    </lineage>
</organism>
<evidence type="ECO:0000255" key="1">
    <source>
        <dbReference type="HAMAP-Rule" id="MF_00229"/>
    </source>
</evidence>
<protein>
    <recommendedName>
        <fullName evidence="1">Histidine ammonia-lyase</fullName>
        <shortName evidence="1">Histidase</shortName>
        <ecNumber evidence="1">4.3.1.3</ecNumber>
    </recommendedName>
</protein>
<name>HUTH_RHORT</name>
<reference key="1">
    <citation type="journal article" date="2011" name="Stand. Genomic Sci.">
        <title>Complete genome sequence of Rhodospirillum rubrum type strain (S1).</title>
        <authorList>
            <person name="Munk A.C."/>
            <person name="Copeland A."/>
            <person name="Lucas S."/>
            <person name="Lapidus A."/>
            <person name="Del Rio T.G."/>
            <person name="Barry K."/>
            <person name="Detter J.C."/>
            <person name="Hammon N."/>
            <person name="Israni S."/>
            <person name="Pitluck S."/>
            <person name="Brettin T."/>
            <person name="Bruce D."/>
            <person name="Han C."/>
            <person name="Tapia R."/>
            <person name="Gilna P."/>
            <person name="Schmutz J."/>
            <person name="Larimer F."/>
            <person name="Land M."/>
            <person name="Kyrpides N.C."/>
            <person name="Mavromatis K."/>
            <person name="Richardson P."/>
            <person name="Rohde M."/>
            <person name="Goeker M."/>
            <person name="Klenk H.P."/>
            <person name="Zhang Y."/>
            <person name="Roberts G.P."/>
            <person name="Reslewic S."/>
            <person name="Schwartz D.C."/>
        </authorList>
    </citation>
    <scope>NUCLEOTIDE SEQUENCE [LARGE SCALE GENOMIC DNA]</scope>
    <source>
        <strain>ATCC 11170 / ATH 1.1.1 / DSM 467 / LMG 4362 / NCIMB 8255 / S1</strain>
    </source>
</reference>
<keyword id="KW-0963">Cytoplasm</keyword>
<keyword id="KW-0369">Histidine metabolism</keyword>
<keyword id="KW-0456">Lyase</keyword>
<keyword id="KW-1185">Reference proteome</keyword>
<accession>Q2RUU3</accession>
<dbReference type="EC" id="4.3.1.3" evidence="1"/>
<dbReference type="EMBL" id="CP000230">
    <property type="protein sequence ID" value="ABC22102.1"/>
    <property type="molecule type" value="Genomic_DNA"/>
</dbReference>
<dbReference type="RefSeq" id="WP_011389056.1">
    <property type="nucleotide sequence ID" value="NC_007643.1"/>
</dbReference>
<dbReference type="RefSeq" id="YP_426389.1">
    <property type="nucleotide sequence ID" value="NC_007643.1"/>
</dbReference>
<dbReference type="SMR" id="Q2RUU3"/>
<dbReference type="STRING" id="269796.Rru_A1301"/>
<dbReference type="EnsemblBacteria" id="ABC22102">
    <property type="protein sequence ID" value="ABC22102"/>
    <property type="gene ID" value="Rru_A1301"/>
</dbReference>
<dbReference type="KEGG" id="rru:Rru_A1301"/>
<dbReference type="PATRIC" id="fig|269796.9.peg.1367"/>
<dbReference type="eggNOG" id="COG2986">
    <property type="taxonomic scope" value="Bacteria"/>
</dbReference>
<dbReference type="HOGENOM" id="CLU_014801_4_0_5"/>
<dbReference type="PhylomeDB" id="Q2RUU3"/>
<dbReference type="UniPathway" id="UPA00379">
    <property type="reaction ID" value="UER00549"/>
</dbReference>
<dbReference type="Proteomes" id="UP000001929">
    <property type="component" value="Chromosome"/>
</dbReference>
<dbReference type="GO" id="GO:0005737">
    <property type="term" value="C:cytoplasm"/>
    <property type="evidence" value="ECO:0007669"/>
    <property type="project" value="UniProtKB-SubCell"/>
</dbReference>
<dbReference type="GO" id="GO:0004397">
    <property type="term" value="F:histidine ammonia-lyase activity"/>
    <property type="evidence" value="ECO:0007669"/>
    <property type="project" value="UniProtKB-UniRule"/>
</dbReference>
<dbReference type="GO" id="GO:0019556">
    <property type="term" value="P:L-histidine catabolic process to glutamate and formamide"/>
    <property type="evidence" value="ECO:0007669"/>
    <property type="project" value="UniProtKB-UniPathway"/>
</dbReference>
<dbReference type="GO" id="GO:0019557">
    <property type="term" value="P:L-histidine catabolic process to glutamate and formate"/>
    <property type="evidence" value="ECO:0007669"/>
    <property type="project" value="UniProtKB-UniPathway"/>
</dbReference>
<dbReference type="CDD" id="cd00332">
    <property type="entry name" value="PAL-HAL"/>
    <property type="match status" value="1"/>
</dbReference>
<dbReference type="FunFam" id="1.10.275.10:FF:000005">
    <property type="entry name" value="Histidine ammonia-lyase"/>
    <property type="match status" value="1"/>
</dbReference>
<dbReference type="FunFam" id="1.20.200.10:FF:000003">
    <property type="entry name" value="Histidine ammonia-lyase"/>
    <property type="match status" value="1"/>
</dbReference>
<dbReference type="Gene3D" id="1.20.200.10">
    <property type="entry name" value="Fumarase/aspartase (Central domain)"/>
    <property type="match status" value="1"/>
</dbReference>
<dbReference type="Gene3D" id="1.10.275.10">
    <property type="entry name" value="Fumarase/aspartase (N-terminal domain)"/>
    <property type="match status" value="1"/>
</dbReference>
<dbReference type="HAMAP" id="MF_00229">
    <property type="entry name" value="His_ammonia_lyase"/>
    <property type="match status" value="1"/>
</dbReference>
<dbReference type="InterPro" id="IPR001106">
    <property type="entry name" value="Aromatic_Lyase"/>
</dbReference>
<dbReference type="InterPro" id="IPR024083">
    <property type="entry name" value="Fumarase/histidase_N"/>
</dbReference>
<dbReference type="InterPro" id="IPR005921">
    <property type="entry name" value="HutH"/>
</dbReference>
<dbReference type="InterPro" id="IPR008948">
    <property type="entry name" value="L-Aspartase-like"/>
</dbReference>
<dbReference type="NCBIfam" id="TIGR01225">
    <property type="entry name" value="hutH"/>
    <property type="match status" value="1"/>
</dbReference>
<dbReference type="NCBIfam" id="NF006871">
    <property type="entry name" value="PRK09367.1"/>
    <property type="match status" value="1"/>
</dbReference>
<dbReference type="PANTHER" id="PTHR10362">
    <property type="entry name" value="HISTIDINE AMMONIA-LYASE"/>
    <property type="match status" value="1"/>
</dbReference>
<dbReference type="Pfam" id="PF00221">
    <property type="entry name" value="Lyase_aromatic"/>
    <property type="match status" value="1"/>
</dbReference>
<dbReference type="SUPFAM" id="SSF48557">
    <property type="entry name" value="L-aspartase-like"/>
    <property type="match status" value="1"/>
</dbReference>
<sequence>MTEPLCLTPGGLSLDVLRRIHREAPPLTLDPRSYAAMAASQAVVAAIAGGESAVYGINTGFGKLAHKRIAPADLEALQTNLILSHATGMGAPIADATVRLILAIKAASLAVGASGIRAEIVDALLALANADVLPVIPSKGSVGASGDLAPLAHLCCALLGIGSVRHKGAVLPAGEGLAIAGLSPITLRAKEGLALINGTQVSTALALAGLFEIERAFAAAILAGALSVEAVMGSHRPFDPRISALRGQFGQIDVAALFRLLLDGSPLNAAHQGPSCERVQDPYSLRCQPQVMGAVLDQMRFAARTLTIEANGVTDNPLVLVDTGEVLSGGNFHAEPVAMAADQLAIAASEIGALSERRIAMLIDSTISGLPPFLVAEPGLNSGFMIAHVTAAALASENKSLAHPASVDSLPTSANQEDHVSMATFAARRLGDIAANVTGIVGIELLAAAQGLEFHRPLRSSQTLETAMAMIRERVPSYRVDRYFAPDLEAIAHLIGEGRFDALVPVDLSTLGSV</sequence>
<comment type="catalytic activity">
    <reaction evidence="1">
        <text>L-histidine = trans-urocanate + NH4(+)</text>
        <dbReference type="Rhea" id="RHEA:21232"/>
        <dbReference type="ChEBI" id="CHEBI:17771"/>
        <dbReference type="ChEBI" id="CHEBI:28938"/>
        <dbReference type="ChEBI" id="CHEBI:57595"/>
        <dbReference type="EC" id="4.3.1.3"/>
    </reaction>
</comment>
<comment type="pathway">
    <text evidence="1">Amino-acid degradation; L-histidine degradation into L-glutamate; N-formimidoyl-L-glutamate from L-histidine: step 1/3.</text>
</comment>
<comment type="subcellular location">
    <subcellularLocation>
        <location evidence="1">Cytoplasm</location>
    </subcellularLocation>
</comment>
<comment type="PTM">
    <text evidence="1">Contains an active site 4-methylidene-imidazol-5-one (MIO), which is formed autocatalytically by cyclization and dehydration of residues Ala-Ser-Gly.</text>
</comment>
<comment type="similarity">
    <text evidence="1">Belongs to the PAL/histidase family.</text>
</comment>